<reference key="1">
    <citation type="journal article" date="2009" name="Science">
        <title>The genome sequence of taurine cattle: a window to ruminant biology and evolution.</title>
        <authorList>
            <consortium name="The bovine genome sequencing and analysis consortium"/>
        </authorList>
    </citation>
    <scope>NUCLEOTIDE SEQUENCE [LARGE SCALE GENOMIC DNA]</scope>
    <source>
        <strain>Hereford</strain>
    </source>
</reference>
<reference evidence="7" key="2">
    <citation type="submission" date="2005-09" db="EMBL/GenBank/DDBJ databases">
        <authorList>
            <consortium name="NIH - Mammalian Gene Collection (MGC) project"/>
        </authorList>
    </citation>
    <scope>NUCLEOTIDE SEQUENCE [LARGE SCALE MRNA]</scope>
    <source>
        <strain evidence="7">Crossbred X Angus</strain>
        <tissue evidence="7">Ileum</tissue>
    </source>
</reference>
<reference evidence="6 8" key="3">
    <citation type="journal article" date="2007" name="J. Immunol.">
        <title>The novel endocytic and phagocytic C-Type lectin receptor DCL-1/CD302 on macrophages is colocalized with F-actin, suggesting a role in cell adhesion and migration.</title>
        <authorList>
            <person name="Kato M."/>
            <person name="Khan S."/>
            <person name="d'Aniello E."/>
            <person name="McDonald K.J."/>
            <person name="Hart D.N."/>
        </authorList>
    </citation>
    <scope>IDENTIFICATION</scope>
</reference>
<dbReference type="EMBL" id="AAFC03027417">
    <property type="status" value="NOT_ANNOTATED_CDS"/>
    <property type="molecule type" value="Genomic_DNA"/>
</dbReference>
<dbReference type="EMBL" id="BC105308">
    <property type="protein sequence ID" value="AAI05309.1"/>
    <property type="status" value="ALT_FRAME"/>
    <property type="molecule type" value="mRNA"/>
</dbReference>
<dbReference type="EMBL" id="BK006292">
    <property type="protein sequence ID" value="DAA06088.1"/>
    <property type="molecule type" value="mRNA"/>
</dbReference>
<dbReference type="RefSeq" id="NP_001103661.2">
    <property type="nucleotide sequence ID" value="NM_001110191.2"/>
</dbReference>
<dbReference type="SMR" id="A8WH74"/>
<dbReference type="FunCoup" id="A8WH74">
    <property type="interactions" value="210"/>
</dbReference>
<dbReference type="STRING" id="9913.ENSBTAP00000050116"/>
<dbReference type="GlyCosmos" id="A8WH74">
    <property type="glycosylation" value="1 site, No reported glycans"/>
</dbReference>
<dbReference type="GlyGen" id="A8WH74">
    <property type="glycosylation" value="1 site"/>
</dbReference>
<dbReference type="PaxDb" id="9913-ENSBTAP00000050116"/>
<dbReference type="Ensembl" id="ENSBTAT00000117846.1">
    <property type="protein sequence ID" value="ENSBTAP00000088335.1"/>
    <property type="gene ID" value="ENSBTAG00000038195.4"/>
</dbReference>
<dbReference type="GeneID" id="100126272"/>
<dbReference type="KEGG" id="bta:100126272"/>
<dbReference type="CTD" id="9936"/>
<dbReference type="VEuPathDB" id="HostDB:ENSBTAG00000038195"/>
<dbReference type="VGNC" id="VGNC:55333">
    <property type="gene designation" value="CD302"/>
</dbReference>
<dbReference type="eggNOG" id="KOG4297">
    <property type="taxonomic scope" value="Eukaryota"/>
</dbReference>
<dbReference type="GeneTree" id="ENSGT01050000244842"/>
<dbReference type="HOGENOM" id="CLU_088281_0_0_1"/>
<dbReference type="InParanoid" id="A8WH74"/>
<dbReference type="OMA" id="RWENVSC"/>
<dbReference type="OrthoDB" id="9945342at2759"/>
<dbReference type="Proteomes" id="UP000009136">
    <property type="component" value="Chromosome 2"/>
</dbReference>
<dbReference type="Bgee" id="ENSBTAG00000038195">
    <property type="expression patterns" value="Expressed in liver and 106 other cell types or tissues"/>
</dbReference>
<dbReference type="GO" id="GO:0005938">
    <property type="term" value="C:cell cortex"/>
    <property type="evidence" value="ECO:0007669"/>
    <property type="project" value="UniProtKB-SubCell"/>
</dbReference>
<dbReference type="GO" id="GO:0030175">
    <property type="term" value="C:filopodium"/>
    <property type="evidence" value="ECO:0007669"/>
    <property type="project" value="UniProtKB-SubCell"/>
</dbReference>
<dbReference type="GO" id="GO:0016020">
    <property type="term" value="C:membrane"/>
    <property type="evidence" value="ECO:0007669"/>
    <property type="project" value="UniProtKB-SubCell"/>
</dbReference>
<dbReference type="GO" id="GO:0005902">
    <property type="term" value="C:microvillus"/>
    <property type="evidence" value="ECO:0007669"/>
    <property type="project" value="UniProtKB-SubCell"/>
</dbReference>
<dbReference type="GO" id="GO:0030246">
    <property type="term" value="F:carbohydrate binding"/>
    <property type="evidence" value="ECO:0007669"/>
    <property type="project" value="UniProtKB-KW"/>
</dbReference>
<dbReference type="GO" id="GO:0038023">
    <property type="term" value="F:signaling receptor activity"/>
    <property type="evidence" value="ECO:0000318"/>
    <property type="project" value="GO_Central"/>
</dbReference>
<dbReference type="GO" id="GO:0006909">
    <property type="term" value="P:phagocytosis"/>
    <property type="evidence" value="ECO:0007669"/>
    <property type="project" value="Ensembl"/>
</dbReference>
<dbReference type="CDD" id="cd00037">
    <property type="entry name" value="CLECT"/>
    <property type="match status" value="1"/>
</dbReference>
<dbReference type="FunFam" id="3.10.100.10:FF:000082">
    <property type="entry name" value="CD302 antigen isoform X2"/>
    <property type="match status" value="1"/>
</dbReference>
<dbReference type="Gene3D" id="3.10.100.10">
    <property type="entry name" value="Mannose-Binding Protein A, subunit A"/>
    <property type="match status" value="1"/>
</dbReference>
<dbReference type="InterPro" id="IPR001304">
    <property type="entry name" value="C-type_lectin-like"/>
</dbReference>
<dbReference type="InterPro" id="IPR016186">
    <property type="entry name" value="C-type_lectin-like/link_sf"/>
</dbReference>
<dbReference type="InterPro" id="IPR050111">
    <property type="entry name" value="C-type_lectin/snaclec_domain"/>
</dbReference>
<dbReference type="InterPro" id="IPR016187">
    <property type="entry name" value="CTDL_fold"/>
</dbReference>
<dbReference type="PANTHER" id="PTHR22803">
    <property type="entry name" value="MANNOSE, PHOSPHOLIPASE, LECTIN RECEPTOR RELATED"/>
    <property type="match status" value="1"/>
</dbReference>
<dbReference type="Pfam" id="PF00059">
    <property type="entry name" value="Lectin_C"/>
    <property type="match status" value="1"/>
</dbReference>
<dbReference type="SMART" id="SM00034">
    <property type="entry name" value="CLECT"/>
    <property type="match status" value="1"/>
</dbReference>
<dbReference type="SUPFAM" id="SSF56436">
    <property type="entry name" value="C-type lectin-like"/>
    <property type="match status" value="1"/>
</dbReference>
<dbReference type="PROSITE" id="PS50041">
    <property type="entry name" value="C_TYPE_LECTIN_2"/>
    <property type="match status" value="1"/>
</dbReference>
<sequence length="232" mass="25972">MPRAAPPALLLPLLGLAAAAAADCPSSTWVQFQDSCYIFLQEAIKVESIEDVRNQCTNHGADMISIHNEEENAFILDTLKKQWKDPADILLGMFFDTDDASFKWFDNSNMTFNKWSDQEDDEELVDTCAFLHTKTGDWKKGNCEVSSVEGTLCKAAIPYEKKYLSDNRILISALVIASTVILTVLGAVVWFLYKRSLDSGFTTVFSAAHQSPYNDDCVLVVAEENEYDIQFN</sequence>
<name>CD302_BOVIN</name>
<accession>A8WH74</accession>
<accession>A8YXZ1</accession>
<accession>F1MF05</accession>
<comment type="function">
    <text evidence="2">Potential multifunctional C-type lectin receptor that may play roles in endocytosis and phagocytosis as well as in cell adhesion and migration.</text>
</comment>
<comment type="subcellular location">
    <subcellularLocation>
        <location evidence="3">Membrane</location>
        <topology evidence="3">Single-pass type I membrane protein</topology>
    </subcellularLocation>
    <subcellularLocation>
        <location evidence="2 3">Cell projection</location>
        <location evidence="2 3">Filopodium</location>
    </subcellularLocation>
    <subcellularLocation>
        <location evidence="2 3">Cytoplasm</location>
        <location evidence="2 3">Cell cortex</location>
    </subcellularLocation>
    <subcellularLocation>
        <location evidence="2 3">Cell projection</location>
        <location evidence="2 3">Microvillus</location>
    </subcellularLocation>
    <text evidence="2 3">Colocalizes with F-actin in filopodia, cellular cortex and microvilli of the apical cell surface.</text>
</comment>
<comment type="sequence caution" evidence="6">
    <conflict type="frameshift">
        <sequence resource="EMBL-CDS" id="AAI05309"/>
    </conflict>
</comment>
<feature type="signal peptide" evidence="3">
    <location>
        <begin position="1"/>
        <end position="22"/>
    </location>
</feature>
<feature type="chain" id="PRO_0000413655" description="CD302 antigen" evidence="3">
    <location>
        <begin position="23"/>
        <end position="232"/>
    </location>
</feature>
<feature type="topological domain" description="Extracellular" evidence="3">
    <location>
        <begin position="23"/>
        <end position="168"/>
    </location>
</feature>
<feature type="transmembrane region" description="Helical" evidence="3">
    <location>
        <begin position="169"/>
        <end position="189"/>
    </location>
</feature>
<feature type="topological domain" description="Cytoplasmic" evidence="3">
    <location>
        <begin position="190"/>
        <end position="232"/>
    </location>
</feature>
<feature type="domain" description="C-type lectin" evidence="4">
    <location>
        <begin position="32"/>
        <end position="152"/>
    </location>
</feature>
<feature type="glycosylation site" description="N-linked (GlcNAc...) asparagine" evidence="3">
    <location>
        <position position="109"/>
    </location>
</feature>
<feature type="disulfide bond" evidence="1 4">
    <location>
        <begin position="128"/>
        <end position="143"/>
    </location>
</feature>
<proteinExistence type="evidence at transcript level"/>
<organism>
    <name type="scientific">Bos taurus</name>
    <name type="common">Bovine</name>
    <dbReference type="NCBI Taxonomy" id="9913"/>
    <lineage>
        <taxon>Eukaryota</taxon>
        <taxon>Metazoa</taxon>
        <taxon>Chordata</taxon>
        <taxon>Craniata</taxon>
        <taxon>Vertebrata</taxon>
        <taxon>Euteleostomi</taxon>
        <taxon>Mammalia</taxon>
        <taxon>Eutheria</taxon>
        <taxon>Laurasiatheria</taxon>
        <taxon>Artiodactyla</taxon>
        <taxon>Ruminantia</taxon>
        <taxon>Pecora</taxon>
        <taxon>Bovidae</taxon>
        <taxon>Bovinae</taxon>
        <taxon>Bos</taxon>
    </lineage>
</organism>
<evidence type="ECO:0000250" key="1">
    <source>
        <dbReference type="UniProtKB" id="Q5KU26"/>
    </source>
</evidence>
<evidence type="ECO:0000250" key="2">
    <source>
        <dbReference type="UniProtKB" id="Q8IX05"/>
    </source>
</evidence>
<evidence type="ECO:0000255" key="3"/>
<evidence type="ECO:0000255" key="4">
    <source>
        <dbReference type="PROSITE-ProRule" id="PRU00040"/>
    </source>
</evidence>
<evidence type="ECO:0000303" key="5">
    <source>
    </source>
</evidence>
<evidence type="ECO:0000305" key="6"/>
<evidence type="ECO:0000312" key="7">
    <source>
        <dbReference type="EMBL" id="AAI05309.1"/>
    </source>
</evidence>
<evidence type="ECO:0000312" key="8">
    <source>
        <dbReference type="EMBL" id="DAA06088.1"/>
    </source>
</evidence>
<keyword id="KW-0966">Cell projection</keyword>
<keyword id="KW-0963">Cytoplasm</keyword>
<keyword id="KW-1015">Disulfide bond</keyword>
<keyword id="KW-0325">Glycoprotein</keyword>
<keyword id="KW-0430">Lectin</keyword>
<keyword id="KW-0472">Membrane</keyword>
<keyword id="KW-0675">Receptor</keyword>
<keyword id="KW-1185">Reference proteome</keyword>
<keyword id="KW-0732">Signal</keyword>
<keyword id="KW-0812">Transmembrane</keyword>
<keyword id="KW-1133">Transmembrane helix</keyword>
<gene>
    <name evidence="7" type="primary">CD302</name>
</gene>
<protein>
    <recommendedName>
        <fullName evidence="2">CD302 antigen</fullName>
    </recommendedName>
    <alternativeName>
        <fullName evidence="5">Type I transmembrane C-type lectin receptor DCL-1</fullName>
    </alternativeName>
</protein>